<name>MIAB_XYLFM</name>
<sequence>MTGTSNIPTHGKEHKDAPALLPLPAPNPHHTHAAHPGDPSHDRPPSRGKLFIKTHGCQMNEYDSAKMADVLTTTEALELTDNPEEADIILINTCSIREKAQEKVFSQLGRWRALKTNGRDVIIGVGGCVASQEGETIVKRAPYVDLVFGPQTLHRLPDMIRARREQNRPQIDISFPEIEKFDHLPTPRAEGPSAFVSIMEGCSKYCSFCVVPYTRGEEVSRPFEDVLTEIAHLATQGVREINLLGQNVNAYRGAMDPGPSNNTNPAAPPYADLGLLIRAIAQFESIGRIRFTTSHPLEFSDSLVEAYRDIPQLANHLHLPVQSGSDRILSAMKRGYTALEFKSKIRKLRAVRPDISISSDFIIGFPGESDTDFQKTMQLIEDIGFDQSFSFIYSRRPGTPASNLEDHTPDEIKRTRLEHLQKHINAYAADISKRMIGTVQTVLVEGPSKKNPNELTGKTENMRPVNFPGNPRLIGQFIDVHITEALTNSLRGRVHTN</sequence>
<comment type="function">
    <text evidence="1">Catalyzes the methylthiolation of N6-(dimethylallyl)adenosine (i(6)A), leading to the formation of 2-methylthio-N6-(dimethylallyl)adenosine (ms(2)i(6)A) at position 37 in tRNAs that read codons beginning with uridine.</text>
</comment>
<comment type="catalytic activity">
    <reaction evidence="1">
        <text>N(6)-dimethylallyladenosine(37) in tRNA + (sulfur carrier)-SH + AH2 + 2 S-adenosyl-L-methionine = 2-methylsulfanyl-N(6)-dimethylallyladenosine(37) in tRNA + (sulfur carrier)-H + 5'-deoxyadenosine + L-methionine + A + S-adenosyl-L-homocysteine + 2 H(+)</text>
        <dbReference type="Rhea" id="RHEA:37067"/>
        <dbReference type="Rhea" id="RHEA-COMP:10375"/>
        <dbReference type="Rhea" id="RHEA-COMP:10376"/>
        <dbReference type="Rhea" id="RHEA-COMP:14737"/>
        <dbReference type="Rhea" id="RHEA-COMP:14739"/>
        <dbReference type="ChEBI" id="CHEBI:13193"/>
        <dbReference type="ChEBI" id="CHEBI:15378"/>
        <dbReference type="ChEBI" id="CHEBI:17319"/>
        <dbReference type="ChEBI" id="CHEBI:17499"/>
        <dbReference type="ChEBI" id="CHEBI:29917"/>
        <dbReference type="ChEBI" id="CHEBI:57844"/>
        <dbReference type="ChEBI" id="CHEBI:57856"/>
        <dbReference type="ChEBI" id="CHEBI:59789"/>
        <dbReference type="ChEBI" id="CHEBI:64428"/>
        <dbReference type="ChEBI" id="CHEBI:74415"/>
        <dbReference type="ChEBI" id="CHEBI:74417"/>
        <dbReference type="EC" id="2.8.4.3"/>
    </reaction>
</comment>
<comment type="cofactor">
    <cofactor evidence="1">
        <name>[4Fe-4S] cluster</name>
        <dbReference type="ChEBI" id="CHEBI:49883"/>
    </cofactor>
    <text evidence="1">Binds 2 [4Fe-4S] clusters. One cluster is coordinated with 3 cysteines and an exchangeable S-adenosyl-L-methionine.</text>
</comment>
<comment type="subunit">
    <text evidence="1">Monomer.</text>
</comment>
<comment type="subcellular location">
    <subcellularLocation>
        <location evidence="1">Cytoplasm</location>
    </subcellularLocation>
</comment>
<comment type="similarity">
    <text evidence="1">Belongs to the methylthiotransferase family. MiaB subfamily.</text>
</comment>
<reference key="1">
    <citation type="journal article" date="2010" name="J. Bacteriol.">
        <title>Whole genome sequences of two Xylella fastidiosa strains (M12 and M23) causing almond leaf scorch disease in California.</title>
        <authorList>
            <person name="Chen J."/>
            <person name="Xie G."/>
            <person name="Han S."/>
            <person name="Chertkov O."/>
            <person name="Sims D."/>
            <person name="Civerolo E.L."/>
        </authorList>
    </citation>
    <scope>NUCLEOTIDE SEQUENCE [LARGE SCALE GENOMIC DNA]</scope>
    <source>
        <strain>M12</strain>
    </source>
</reference>
<dbReference type="EC" id="2.8.4.3" evidence="1"/>
<dbReference type="EMBL" id="CP000941">
    <property type="protein sequence ID" value="ACA12820.1"/>
    <property type="molecule type" value="Genomic_DNA"/>
</dbReference>
<dbReference type="RefSeq" id="WP_004086472.1">
    <property type="nucleotide sequence ID" value="NC_010513.1"/>
</dbReference>
<dbReference type="SMR" id="B0U4P1"/>
<dbReference type="KEGG" id="xfm:Xfasm12_1947"/>
<dbReference type="HOGENOM" id="CLU_018697_2_0_6"/>
<dbReference type="GO" id="GO:0005829">
    <property type="term" value="C:cytosol"/>
    <property type="evidence" value="ECO:0007669"/>
    <property type="project" value="TreeGrafter"/>
</dbReference>
<dbReference type="GO" id="GO:0051539">
    <property type="term" value="F:4 iron, 4 sulfur cluster binding"/>
    <property type="evidence" value="ECO:0007669"/>
    <property type="project" value="UniProtKB-UniRule"/>
</dbReference>
<dbReference type="GO" id="GO:0046872">
    <property type="term" value="F:metal ion binding"/>
    <property type="evidence" value="ECO:0007669"/>
    <property type="project" value="UniProtKB-KW"/>
</dbReference>
<dbReference type="GO" id="GO:0035597">
    <property type="term" value="F:N6-isopentenyladenosine methylthiotransferase activity"/>
    <property type="evidence" value="ECO:0007669"/>
    <property type="project" value="TreeGrafter"/>
</dbReference>
<dbReference type="CDD" id="cd01335">
    <property type="entry name" value="Radical_SAM"/>
    <property type="match status" value="1"/>
</dbReference>
<dbReference type="FunFam" id="3.40.50.12160:FF:000001">
    <property type="entry name" value="tRNA-2-methylthio-N(6)-dimethylallyladenosine synthase"/>
    <property type="match status" value="1"/>
</dbReference>
<dbReference type="FunFam" id="3.80.30.20:FF:000001">
    <property type="entry name" value="tRNA-2-methylthio-N(6)-dimethylallyladenosine synthase 2"/>
    <property type="match status" value="1"/>
</dbReference>
<dbReference type="Gene3D" id="3.40.50.12160">
    <property type="entry name" value="Methylthiotransferase, N-terminal domain"/>
    <property type="match status" value="1"/>
</dbReference>
<dbReference type="Gene3D" id="3.80.30.20">
    <property type="entry name" value="tm_1862 like domain"/>
    <property type="match status" value="1"/>
</dbReference>
<dbReference type="HAMAP" id="MF_01864">
    <property type="entry name" value="tRNA_metthiotr_MiaB"/>
    <property type="match status" value="1"/>
</dbReference>
<dbReference type="InterPro" id="IPR006638">
    <property type="entry name" value="Elp3/MiaA/NifB-like_rSAM"/>
</dbReference>
<dbReference type="InterPro" id="IPR005839">
    <property type="entry name" value="Methylthiotransferase"/>
</dbReference>
<dbReference type="InterPro" id="IPR020612">
    <property type="entry name" value="Methylthiotransferase_CS"/>
</dbReference>
<dbReference type="InterPro" id="IPR013848">
    <property type="entry name" value="Methylthiotransferase_N"/>
</dbReference>
<dbReference type="InterPro" id="IPR038135">
    <property type="entry name" value="Methylthiotransferase_N_sf"/>
</dbReference>
<dbReference type="InterPro" id="IPR006463">
    <property type="entry name" value="MiaB_methiolase"/>
</dbReference>
<dbReference type="InterPro" id="IPR007197">
    <property type="entry name" value="rSAM"/>
</dbReference>
<dbReference type="InterPro" id="IPR023404">
    <property type="entry name" value="rSAM_horseshoe"/>
</dbReference>
<dbReference type="InterPro" id="IPR002792">
    <property type="entry name" value="TRAM_dom"/>
</dbReference>
<dbReference type="NCBIfam" id="TIGR01574">
    <property type="entry name" value="miaB-methiolase"/>
    <property type="match status" value="1"/>
</dbReference>
<dbReference type="NCBIfam" id="TIGR00089">
    <property type="entry name" value="MiaB/RimO family radical SAM methylthiotransferase"/>
    <property type="match status" value="1"/>
</dbReference>
<dbReference type="PANTHER" id="PTHR43020">
    <property type="entry name" value="CDK5 REGULATORY SUBUNIT-ASSOCIATED PROTEIN 1"/>
    <property type="match status" value="1"/>
</dbReference>
<dbReference type="PANTHER" id="PTHR43020:SF2">
    <property type="entry name" value="MITOCHONDRIAL TRNA METHYLTHIOTRANSFERASE CDK5RAP1"/>
    <property type="match status" value="1"/>
</dbReference>
<dbReference type="Pfam" id="PF04055">
    <property type="entry name" value="Radical_SAM"/>
    <property type="match status" value="1"/>
</dbReference>
<dbReference type="Pfam" id="PF01938">
    <property type="entry name" value="TRAM"/>
    <property type="match status" value="1"/>
</dbReference>
<dbReference type="Pfam" id="PF00919">
    <property type="entry name" value="UPF0004"/>
    <property type="match status" value="1"/>
</dbReference>
<dbReference type="SFLD" id="SFLDF00273">
    <property type="entry name" value="(dimethylallyl)adenosine_tRNA"/>
    <property type="match status" value="1"/>
</dbReference>
<dbReference type="SFLD" id="SFLDG01082">
    <property type="entry name" value="B12-binding_domain_containing"/>
    <property type="match status" value="1"/>
</dbReference>
<dbReference type="SFLD" id="SFLDS00029">
    <property type="entry name" value="Radical_SAM"/>
    <property type="match status" value="1"/>
</dbReference>
<dbReference type="SMART" id="SM00729">
    <property type="entry name" value="Elp3"/>
    <property type="match status" value="1"/>
</dbReference>
<dbReference type="SUPFAM" id="SSF102114">
    <property type="entry name" value="Radical SAM enzymes"/>
    <property type="match status" value="1"/>
</dbReference>
<dbReference type="PROSITE" id="PS51449">
    <property type="entry name" value="MTTASE_N"/>
    <property type="match status" value="1"/>
</dbReference>
<dbReference type="PROSITE" id="PS01278">
    <property type="entry name" value="MTTASE_RADICAL"/>
    <property type="match status" value="1"/>
</dbReference>
<dbReference type="PROSITE" id="PS51918">
    <property type="entry name" value="RADICAL_SAM"/>
    <property type="match status" value="1"/>
</dbReference>
<dbReference type="PROSITE" id="PS50926">
    <property type="entry name" value="TRAM"/>
    <property type="match status" value="1"/>
</dbReference>
<feature type="chain" id="PRO_0000374651" description="tRNA-2-methylthio-N(6)-dimethylallyladenosine synthase">
    <location>
        <begin position="1"/>
        <end position="497"/>
    </location>
</feature>
<feature type="domain" description="MTTase N-terminal" evidence="1">
    <location>
        <begin position="48"/>
        <end position="165"/>
    </location>
</feature>
<feature type="domain" description="Radical SAM core" evidence="2">
    <location>
        <begin position="188"/>
        <end position="430"/>
    </location>
</feature>
<feature type="domain" description="TRAM" evidence="1">
    <location>
        <begin position="433"/>
        <end position="496"/>
    </location>
</feature>
<feature type="region of interest" description="Disordered" evidence="3">
    <location>
        <begin position="1"/>
        <end position="50"/>
    </location>
</feature>
<feature type="binding site" evidence="1">
    <location>
        <position position="57"/>
    </location>
    <ligand>
        <name>[4Fe-4S] cluster</name>
        <dbReference type="ChEBI" id="CHEBI:49883"/>
        <label>1</label>
    </ligand>
</feature>
<feature type="binding site" evidence="1">
    <location>
        <position position="94"/>
    </location>
    <ligand>
        <name>[4Fe-4S] cluster</name>
        <dbReference type="ChEBI" id="CHEBI:49883"/>
        <label>1</label>
    </ligand>
</feature>
<feature type="binding site" evidence="1">
    <location>
        <position position="128"/>
    </location>
    <ligand>
        <name>[4Fe-4S] cluster</name>
        <dbReference type="ChEBI" id="CHEBI:49883"/>
        <label>1</label>
    </ligand>
</feature>
<feature type="binding site" evidence="1">
    <location>
        <position position="202"/>
    </location>
    <ligand>
        <name>[4Fe-4S] cluster</name>
        <dbReference type="ChEBI" id="CHEBI:49883"/>
        <label>2</label>
        <note>4Fe-4S-S-AdoMet</note>
    </ligand>
</feature>
<feature type="binding site" evidence="1">
    <location>
        <position position="206"/>
    </location>
    <ligand>
        <name>[4Fe-4S] cluster</name>
        <dbReference type="ChEBI" id="CHEBI:49883"/>
        <label>2</label>
        <note>4Fe-4S-S-AdoMet</note>
    </ligand>
</feature>
<feature type="binding site" evidence="1">
    <location>
        <position position="209"/>
    </location>
    <ligand>
        <name>[4Fe-4S] cluster</name>
        <dbReference type="ChEBI" id="CHEBI:49883"/>
        <label>2</label>
        <note>4Fe-4S-S-AdoMet</note>
    </ligand>
</feature>
<organism>
    <name type="scientific">Xylella fastidiosa (strain M12)</name>
    <dbReference type="NCBI Taxonomy" id="405440"/>
    <lineage>
        <taxon>Bacteria</taxon>
        <taxon>Pseudomonadati</taxon>
        <taxon>Pseudomonadota</taxon>
        <taxon>Gammaproteobacteria</taxon>
        <taxon>Lysobacterales</taxon>
        <taxon>Lysobacteraceae</taxon>
        <taxon>Xylella</taxon>
    </lineage>
</organism>
<accession>B0U4P1</accession>
<keyword id="KW-0004">4Fe-4S</keyword>
<keyword id="KW-0963">Cytoplasm</keyword>
<keyword id="KW-0408">Iron</keyword>
<keyword id="KW-0411">Iron-sulfur</keyword>
<keyword id="KW-0479">Metal-binding</keyword>
<keyword id="KW-0949">S-adenosyl-L-methionine</keyword>
<keyword id="KW-0808">Transferase</keyword>
<keyword id="KW-0819">tRNA processing</keyword>
<evidence type="ECO:0000255" key="1">
    <source>
        <dbReference type="HAMAP-Rule" id="MF_01864"/>
    </source>
</evidence>
<evidence type="ECO:0000255" key="2">
    <source>
        <dbReference type="PROSITE-ProRule" id="PRU01266"/>
    </source>
</evidence>
<evidence type="ECO:0000256" key="3">
    <source>
        <dbReference type="SAM" id="MobiDB-lite"/>
    </source>
</evidence>
<proteinExistence type="inferred from homology"/>
<gene>
    <name evidence="1" type="primary">miaB</name>
    <name type="ordered locus">Xfasm12_1947</name>
</gene>
<protein>
    <recommendedName>
        <fullName evidence="1">tRNA-2-methylthio-N(6)-dimethylallyladenosine synthase</fullName>
        <ecNumber evidence="1">2.8.4.3</ecNumber>
    </recommendedName>
    <alternativeName>
        <fullName evidence="1">(Dimethylallyl)adenosine tRNA methylthiotransferase MiaB</fullName>
    </alternativeName>
    <alternativeName>
        <fullName evidence="1">tRNA-i(6)A37 methylthiotransferase</fullName>
    </alternativeName>
</protein>